<sequence>MRFAIVVTGPAYGTQQASSAFQFAQALIAEGHELSCVFFYREGVYNANQLTSPASDEFDLVRGWQQLNAQHGVALNICVAAALRRGIVDETEAGRLGLASSNLQSGFTLSGLGALAEASLTCDRVVQF</sequence>
<accession>B7NLQ0</accession>
<dbReference type="EC" id="2.8.1.-" evidence="1"/>
<dbReference type="EMBL" id="CU928164">
    <property type="protein sequence ID" value="CAR19939.1"/>
    <property type="molecule type" value="Genomic_DNA"/>
</dbReference>
<dbReference type="RefSeq" id="WP_001209685.1">
    <property type="nucleotide sequence ID" value="NC_011750.1"/>
</dbReference>
<dbReference type="RefSeq" id="YP_002409722.1">
    <property type="nucleotide sequence ID" value="NC_011750.1"/>
</dbReference>
<dbReference type="SMR" id="B7NLQ0"/>
<dbReference type="STRING" id="585057.ECIAI39_3825"/>
<dbReference type="KEGG" id="ect:ECIAI39_3825"/>
<dbReference type="PATRIC" id="fig|585057.6.peg.3962"/>
<dbReference type="HOGENOM" id="CLU_132095_0_0_6"/>
<dbReference type="Proteomes" id="UP000000749">
    <property type="component" value="Chromosome"/>
</dbReference>
<dbReference type="GO" id="GO:1990228">
    <property type="term" value="C:sulfurtransferase complex"/>
    <property type="evidence" value="ECO:0007669"/>
    <property type="project" value="TreeGrafter"/>
</dbReference>
<dbReference type="GO" id="GO:0097163">
    <property type="term" value="F:sulfur carrier activity"/>
    <property type="evidence" value="ECO:0007669"/>
    <property type="project" value="TreeGrafter"/>
</dbReference>
<dbReference type="GO" id="GO:0016783">
    <property type="term" value="F:sulfurtransferase activity"/>
    <property type="evidence" value="ECO:0007669"/>
    <property type="project" value="UniProtKB-UniRule"/>
</dbReference>
<dbReference type="GO" id="GO:0002143">
    <property type="term" value="P:tRNA wobble position uridine thiolation"/>
    <property type="evidence" value="ECO:0007669"/>
    <property type="project" value="TreeGrafter"/>
</dbReference>
<dbReference type="FunFam" id="3.40.1260.10:FF:000001">
    <property type="entry name" value="Sulfurtransferase TusD"/>
    <property type="match status" value="1"/>
</dbReference>
<dbReference type="Gene3D" id="3.40.1260.10">
    <property type="entry name" value="DsrEFH-like"/>
    <property type="match status" value="1"/>
</dbReference>
<dbReference type="HAMAP" id="MF_00390">
    <property type="entry name" value="Thiourid_synth_D"/>
    <property type="match status" value="1"/>
</dbReference>
<dbReference type="InterPro" id="IPR027396">
    <property type="entry name" value="DsrEFH-like"/>
</dbReference>
<dbReference type="InterPro" id="IPR003787">
    <property type="entry name" value="Sulphur_relay_DsrE/F-like"/>
</dbReference>
<dbReference type="InterPro" id="IPR017463">
    <property type="entry name" value="Sulphur_relay_TusD/DsrE"/>
</dbReference>
<dbReference type="NCBIfam" id="NF001237">
    <property type="entry name" value="PRK00207.1"/>
    <property type="match status" value="1"/>
</dbReference>
<dbReference type="NCBIfam" id="TIGR03012">
    <property type="entry name" value="sulf_tusD_dsrE"/>
    <property type="match status" value="1"/>
</dbReference>
<dbReference type="PANTHER" id="PTHR34874">
    <property type="entry name" value="PROTEIN YCHN"/>
    <property type="match status" value="1"/>
</dbReference>
<dbReference type="PANTHER" id="PTHR34874:SF3">
    <property type="entry name" value="SULFURTRANSFERASE TUSD"/>
    <property type="match status" value="1"/>
</dbReference>
<dbReference type="Pfam" id="PF02635">
    <property type="entry name" value="DsrE"/>
    <property type="match status" value="1"/>
</dbReference>
<dbReference type="SUPFAM" id="SSF75169">
    <property type="entry name" value="DsrEFH-like"/>
    <property type="match status" value="1"/>
</dbReference>
<name>TUSD_ECO7I</name>
<organism>
    <name type="scientific">Escherichia coli O7:K1 (strain IAI39 / ExPEC)</name>
    <dbReference type="NCBI Taxonomy" id="585057"/>
    <lineage>
        <taxon>Bacteria</taxon>
        <taxon>Pseudomonadati</taxon>
        <taxon>Pseudomonadota</taxon>
        <taxon>Gammaproteobacteria</taxon>
        <taxon>Enterobacterales</taxon>
        <taxon>Enterobacteriaceae</taxon>
        <taxon>Escherichia</taxon>
    </lineage>
</organism>
<gene>
    <name evidence="1" type="primary">tusD</name>
    <name type="ordered locus">ECIAI39_3825</name>
</gene>
<evidence type="ECO:0000255" key="1">
    <source>
        <dbReference type="HAMAP-Rule" id="MF_00390"/>
    </source>
</evidence>
<protein>
    <recommendedName>
        <fullName evidence="1">Sulfurtransferase TusD</fullName>
        <ecNumber evidence="1">2.8.1.-</ecNumber>
    </recommendedName>
    <alternativeName>
        <fullName evidence="1">tRNA 2-thiouridine synthesizing protein D</fullName>
    </alternativeName>
</protein>
<feature type="chain" id="PRO_1000122858" description="Sulfurtransferase TusD">
    <location>
        <begin position="1"/>
        <end position="128"/>
    </location>
</feature>
<feature type="active site" description="Cysteine persulfide intermediate" evidence="1">
    <location>
        <position position="78"/>
    </location>
</feature>
<comment type="function">
    <text evidence="1">Part of a sulfur-relay system required for 2-thiolation of 5-methylaminomethyl-2-thiouridine (mnm(5)s(2)U) at tRNA wobble positions. Accepts sulfur from TusA and transfers it in turn to TusE.</text>
</comment>
<comment type="subunit">
    <text evidence="1">Heterohexamer, formed by a dimer of trimers. The hexameric TusBCD complex contains 2 copies each of TusB, TusC and TusD. The TusBCD complex interacts with TusE.</text>
</comment>
<comment type="subcellular location">
    <subcellularLocation>
        <location evidence="1">Cytoplasm</location>
    </subcellularLocation>
</comment>
<comment type="similarity">
    <text evidence="1">Belongs to the DsrE/TusD family.</text>
</comment>
<proteinExistence type="inferred from homology"/>
<reference key="1">
    <citation type="journal article" date="2009" name="PLoS Genet.">
        <title>Organised genome dynamics in the Escherichia coli species results in highly diverse adaptive paths.</title>
        <authorList>
            <person name="Touchon M."/>
            <person name="Hoede C."/>
            <person name="Tenaillon O."/>
            <person name="Barbe V."/>
            <person name="Baeriswyl S."/>
            <person name="Bidet P."/>
            <person name="Bingen E."/>
            <person name="Bonacorsi S."/>
            <person name="Bouchier C."/>
            <person name="Bouvet O."/>
            <person name="Calteau A."/>
            <person name="Chiapello H."/>
            <person name="Clermont O."/>
            <person name="Cruveiller S."/>
            <person name="Danchin A."/>
            <person name="Diard M."/>
            <person name="Dossat C."/>
            <person name="Karoui M.E."/>
            <person name="Frapy E."/>
            <person name="Garry L."/>
            <person name="Ghigo J.M."/>
            <person name="Gilles A.M."/>
            <person name="Johnson J."/>
            <person name="Le Bouguenec C."/>
            <person name="Lescat M."/>
            <person name="Mangenot S."/>
            <person name="Martinez-Jehanne V."/>
            <person name="Matic I."/>
            <person name="Nassif X."/>
            <person name="Oztas S."/>
            <person name="Petit M.A."/>
            <person name="Pichon C."/>
            <person name="Rouy Z."/>
            <person name="Ruf C.S."/>
            <person name="Schneider D."/>
            <person name="Tourret J."/>
            <person name="Vacherie B."/>
            <person name="Vallenet D."/>
            <person name="Medigue C."/>
            <person name="Rocha E.P.C."/>
            <person name="Denamur E."/>
        </authorList>
    </citation>
    <scope>NUCLEOTIDE SEQUENCE [LARGE SCALE GENOMIC DNA]</scope>
    <source>
        <strain>IAI39 / ExPEC</strain>
    </source>
</reference>
<keyword id="KW-0963">Cytoplasm</keyword>
<keyword id="KW-0808">Transferase</keyword>
<keyword id="KW-0819">tRNA processing</keyword>